<dbReference type="EC" id="2.7.7.7"/>
<dbReference type="EC" id="3.1.11.1"/>
<dbReference type="EMBL" id="AJ248283">
    <property type="protein sequence ID" value="CAB49045.1"/>
    <property type="molecule type" value="Genomic_DNA"/>
</dbReference>
<dbReference type="EMBL" id="HE613800">
    <property type="protein sequence ID" value="CCE69497.1"/>
    <property type="molecule type" value="Genomic_DNA"/>
</dbReference>
<dbReference type="PIR" id="F75199">
    <property type="entry name" value="F75199"/>
</dbReference>
<dbReference type="RefSeq" id="WP_010867245.1">
    <property type="nucleotide sequence ID" value="NC_000868.1"/>
</dbReference>
<dbReference type="PDB" id="5IHE">
    <property type="method" value="X-ray"/>
    <property type="resolution" value="2.50 A"/>
    <property type="chains" value="A/B=145-619"/>
</dbReference>
<dbReference type="PDB" id="6HMF">
    <property type="method" value="X-ray"/>
    <property type="resolution" value="2.60 A"/>
    <property type="chains" value="A/B=145-619"/>
</dbReference>
<dbReference type="PDB" id="6HMS">
    <property type="method" value="EM"/>
    <property type="resolution" value="7.10 A"/>
    <property type="chains" value="A=225-619"/>
</dbReference>
<dbReference type="PDB" id="6T8H">
    <property type="method" value="EM"/>
    <property type="resolution" value="3.77 A"/>
    <property type="chains" value="A=1-619"/>
</dbReference>
<dbReference type="PDB" id="8PPT">
    <property type="method" value="EM"/>
    <property type="resolution" value="2.90 A"/>
    <property type="chains" value="A=2-619"/>
</dbReference>
<dbReference type="PDB" id="8PPU">
    <property type="method" value="EM"/>
    <property type="resolution" value="3.02 A"/>
    <property type="chains" value="A=2-619"/>
</dbReference>
<dbReference type="PDB" id="8PPV">
    <property type="method" value="EM"/>
    <property type="resolution" value="3.02 A"/>
    <property type="chains" value="A=2-619"/>
</dbReference>
<dbReference type="PDB" id="9F29">
    <property type="method" value="EM"/>
    <property type="resolution" value="2.94 A"/>
    <property type="chains" value="A=2-619"/>
</dbReference>
<dbReference type="PDB" id="9F2A">
    <property type="method" value="EM"/>
    <property type="resolution" value="2.91 A"/>
    <property type="chains" value="A=2-619"/>
</dbReference>
<dbReference type="PDBsum" id="5IHE"/>
<dbReference type="PDBsum" id="6HMF"/>
<dbReference type="PDBsum" id="6HMS"/>
<dbReference type="PDBsum" id="6T8H"/>
<dbReference type="PDBsum" id="8PPT"/>
<dbReference type="PDBsum" id="8PPU"/>
<dbReference type="PDBsum" id="8PPV"/>
<dbReference type="PDBsum" id="9F29"/>
<dbReference type="PDBsum" id="9F2A"/>
<dbReference type="EMDB" id="EMD-0244"/>
<dbReference type="EMDB" id="EMD-10401"/>
<dbReference type="EMDB" id="EMD-17815"/>
<dbReference type="EMDB" id="EMD-17816"/>
<dbReference type="EMDB" id="EMD-17817"/>
<dbReference type="EMDB" id="EMD-50140"/>
<dbReference type="EMDB" id="EMD-50143"/>
<dbReference type="SMR" id="Q9V2F3"/>
<dbReference type="STRING" id="272844.PAB2266"/>
<dbReference type="KEGG" id="pab:PAB2266"/>
<dbReference type="PATRIC" id="fig|272844.11.peg.134"/>
<dbReference type="eggNOG" id="arCOG04455">
    <property type="taxonomic scope" value="Archaea"/>
</dbReference>
<dbReference type="HOGENOM" id="CLU_027850_1_0_2"/>
<dbReference type="OrthoDB" id="372039at2157"/>
<dbReference type="PhylomeDB" id="Q9V2F3"/>
<dbReference type="BRENDA" id="2.7.7.7">
    <property type="organism ID" value="5242"/>
</dbReference>
<dbReference type="Proteomes" id="UP000000810">
    <property type="component" value="Chromosome"/>
</dbReference>
<dbReference type="Proteomes" id="UP000009139">
    <property type="component" value="Chromosome"/>
</dbReference>
<dbReference type="GO" id="GO:0042575">
    <property type="term" value="C:DNA polymerase complex"/>
    <property type="evidence" value="ECO:0007669"/>
    <property type="project" value="TreeGrafter"/>
</dbReference>
<dbReference type="GO" id="GO:0003677">
    <property type="term" value="F:DNA binding"/>
    <property type="evidence" value="ECO:0007669"/>
    <property type="project" value="UniProtKB-UniRule"/>
</dbReference>
<dbReference type="GO" id="GO:0003887">
    <property type="term" value="F:DNA-directed DNA polymerase activity"/>
    <property type="evidence" value="ECO:0007669"/>
    <property type="project" value="UniProtKB-UniRule"/>
</dbReference>
<dbReference type="GO" id="GO:0008310">
    <property type="term" value="F:single-stranded DNA 3'-5' DNA exonuclease activity"/>
    <property type="evidence" value="ECO:0007669"/>
    <property type="project" value="UniProtKB-EC"/>
</dbReference>
<dbReference type="GO" id="GO:0006308">
    <property type="term" value="P:DNA catabolic process"/>
    <property type="evidence" value="ECO:0007669"/>
    <property type="project" value="UniProtKB-UniRule"/>
</dbReference>
<dbReference type="GO" id="GO:0006271">
    <property type="term" value="P:DNA strand elongation involved in DNA replication"/>
    <property type="evidence" value="ECO:0007669"/>
    <property type="project" value="TreeGrafter"/>
</dbReference>
<dbReference type="CDD" id="cd07386">
    <property type="entry name" value="MPP_DNA_pol_II_small_archeal_C"/>
    <property type="match status" value="1"/>
</dbReference>
<dbReference type="CDD" id="cd04490">
    <property type="entry name" value="PolII_SU_OBF"/>
    <property type="match status" value="1"/>
</dbReference>
<dbReference type="FunFam" id="3.60.21.50:FF:000003">
    <property type="entry name" value="DNA polymerase II small subunit"/>
    <property type="match status" value="1"/>
</dbReference>
<dbReference type="Gene3D" id="3.60.21.50">
    <property type="match status" value="1"/>
</dbReference>
<dbReference type="Gene3D" id="1.10.8.800">
    <property type="entry name" value="D-family DNA polymerase, DP1 subunit N-terminal domain"/>
    <property type="match status" value="1"/>
</dbReference>
<dbReference type="Gene3D" id="2.40.50.140">
    <property type="entry name" value="Nucleic acid-binding proteins"/>
    <property type="match status" value="1"/>
</dbReference>
<dbReference type="HAMAP" id="MF_00325">
    <property type="entry name" value="DNApol_II_A_arch"/>
    <property type="match status" value="1"/>
</dbReference>
<dbReference type="InterPro" id="IPR004843">
    <property type="entry name" value="Calcineurin-like_PHP_ApaH"/>
</dbReference>
<dbReference type="InterPro" id="IPR024826">
    <property type="entry name" value="DNA_pol_delta/II_ssu"/>
</dbReference>
<dbReference type="InterPro" id="IPR029052">
    <property type="entry name" value="Metallo-depent_PP-like"/>
</dbReference>
<dbReference type="InterPro" id="IPR012340">
    <property type="entry name" value="NA-bd_OB-fold"/>
</dbReference>
<dbReference type="InterPro" id="IPR011149">
    <property type="entry name" value="Pol2_small_arc"/>
</dbReference>
<dbReference type="InterPro" id="IPR054750">
    <property type="entry name" value="PolB_N"/>
</dbReference>
<dbReference type="NCBIfam" id="NF003117">
    <property type="entry name" value="PRK04036.1-2"/>
    <property type="match status" value="1"/>
</dbReference>
<dbReference type="NCBIfam" id="NF003118">
    <property type="entry name" value="PRK04036.1-3"/>
    <property type="match status" value="1"/>
</dbReference>
<dbReference type="PANTHER" id="PTHR10416">
    <property type="entry name" value="DNA POLYMERASE DELTA SUBUNIT 2"/>
    <property type="match status" value="1"/>
</dbReference>
<dbReference type="PANTHER" id="PTHR10416:SF0">
    <property type="entry name" value="DNA POLYMERASE DELTA SUBUNIT 2"/>
    <property type="match status" value="1"/>
</dbReference>
<dbReference type="Pfam" id="PF00149">
    <property type="entry name" value="Metallophos"/>
    <property type="match status" value="1"/>
</dbReference>
<dbReference type="Pfam" id="PF22317">
    <property type="entry name" value="PolB_N"/>
    <property type="match status" value="1"/>
</dbReference>
<dbReference type="PIRSF" id="PIRSF000803">
    <property type="entry name" value="Arc_Pol2_small"/>
    <property type="match status" value="1"/>
</dbReference>
<dbReference type="SUPFAM" id="SSF56300">
    <property type="entry name" value="Metallo-dependent phosphatases"/>
    <property type="match status" value="1"/>
</dbReference>
<dbReference type="SUPFAM" id="SSF50249">
    <property type="entry name" value="Nucleic acid-binding proteins"/>
    <property type="match status" value="1"/>
</dbReference>
<organism>
    <name type="scientific">Pyrococcus abyssi (strain GE5 / Orsay)</name>
    <dbReference type="NCBI Taxonomy" id="272844"/>
    <lineage>
        <taxon>Archaea</taxon>
        <taxon>Methanobacteriati</taxon>
        <taxon>Methanobacteriota</taxon>
        <taxon>Thermococci</taxon>
        <taxon>Thermococcales</taxon>
        <taxon>Thermococcaceae</taxon>
        <taxon>Pyrococcus</taxon>
    </lineage>
</organism>
<sequence length="619" mass="69395">MDELVKALERAGYLLTPSAYYLLVDHFKEGKFSLVELVKFAKSKGVFIIDGDLAYEFLQFLGLGVPQEIKESYISTGEEAEKTVESQETRASELEEGGVSQVSSGELQELKEESPEISTTEEEIGGLELVQSSISTGSEVEYNNGENGESVVVLDKYGYPILYAPEEIGEEKEYSKYEDVVIEWNPSVTPVQIEKNYEVKFDVRQVKLRPPKVKNGSGKEGEIIVEAYASLFKSRLSKLKRILRENPEISNVVDIGKLNYVSGDEEVTIIGLVNSKRETNRGLIFEVEDKTGIVKVFLPKDSEDYREAFKVLPDAVVAFKGFYSKKGIFFANKFYLPDVPLYRKQKPPLEEKVYAILISDIHVGSREFCEKAFLKFLEWLNGHVESKEEEEIVSRVKYLIIAGDVVDGIGIYPGQYSDLVIPDIFDQYEALANLLANVPEHITMFIGPGNHDAARPAIPQPEFYKEYAKPIYKLKNAIIISNPAVIRLHGRDFLIAHGRGIEDVVSFVPGLTHHKPGLPMVELLKMRHLAPTFGGKVPIAPDPEDLLVIEEVPDLVQMGHVHVYDAVVYRGVQLVNSATWQAQTEFQKMVNIVPTPAKVPVVDVESARVVKVLDFSGWC</sequence>
<accession>Q9V2F3</accession>
<accession>G8ZFV6</accession>
<reference key="1">
    <citation type="journal article" date="2003" name="Mol. Microbiol.">
        <title>An integrated analysis of the genome of the hyperthermophilic archaeon Pyrococcus abyssi.</title>
        <authorList>
            <person name="Cohen G.N."/>
            <person name="Barbe V."/>
            <person name="Flament D."/>
            <person name="Galperin M."/>
            <person name="Heilig R."/>
            <person name="Lecompte O."/>
            <person name="Poch O."/>
            <person name="Prieur D."/>
            <person name="Querellou J."/>
            <person name="Ripp R."/>
            <person name="Thierry J.-C."/>
            <person name="Van der Oost J."/>
            <person name="Weissenbach J."/>
            <person name="Zivanovic Y."/>
            <person name="Forterre P."/>
        </authorList>
    </citation>
    <scope>NUCLEOTIDE SEQUENCE [LARGE SCALE GENOMIC DNA]</scope>
    <source>
        <strain>GE5 / Orsay</strain>
    </source>
</reference>
<reference key="2">
    <citation type="journal article" date="2012" name="Curr. Microbiol.">
        <title>Re-annotation of two hyperthermophilic archaea Pyrococcus abyssi GE5 and Pyrococcus furiosus DSM 3638.</title>
        <authorList>
            <person name="Gao J."/>
            <person name="Wang J."/>
        </authorList>
    </citation>
    <scope>GENOME REANNOTATION</scope>
    <source>
        <strain>GE5 / Orsay</strain>
    </source>
</reference>
<evidence type="ECO:0000250" key="1"/>
<evidence type="ECO:0000256" key="2">
    <source>
        <dbReference type="SAM" id="MobiDB-lite"/>
    </source>
</evidence>
<evidence type="ECO:0000305" key="3"/>
<evidence type="ECO:0007829" key="4">
    <source>
        <dbReference type="PDB" id="5IHE"/>
    </source>
</evidence>
<evidence type="ECO:0007829" key="5">
    <source>
        <dbReference type="PDB" id="6HMF"/>
    </source>
</evidence>
<evidence type="ECO:0007829" key="6">
    <source>
        <dbReference type="PDB" id="8PPT"/>
    </source>
</evidence>
<evidence type="ECO:0007829" key="7">
    <source>
        <dbReference type="PDB" id="9F2A"/>
    </source>
</evidence>
<gene>
    <name type="primary">polB</name>
    <name type="ordered locus">PYRAB01210</name>
    <name type="ORF">PAB2266</name>
</gene>
<feature type="chain" id="PRO_0000096179" description="DNA polymerase II small subunit">
    <location>
        <begin position="1"/>
        <end position="619"/>
    </location>
</feature>
<feature type="region of interest" description="Disordered" evidence="2">
    <location>
        <begin position="78"/>
        <end position="122"/>
    </location>
</feature>
<feature type="compositionally biased region" description="Basic and acidic residues" evidence="2">
    <location>
        <begin position="79"/>
        <end position="93"/>
    </location>
</feature>
<feature type="strand" evidence="4">
    <location>
        <begin position="154"/>
        <end position="156"/>
    </location>
</feature>
<feature type="strand" evidence="4">
    <location>
        <begin position="159"/>
        <end position="162"/>
    </location>
</feature>
<feature type="strand" evidence="5">
    <location>
        <begin position="177"/>
        <end position="179"/>
    </location>
</feature>
<feature type="strand" evidence="4">
    <location>
        <begin position="197"/>
        <end position="201"/>
    </location>
</feature>
<feature type="helix" evidence="4">
    <location>
        <begin position="203"/>
        <end position="205"/>
    </location>
</feature>
<feature type="strand" evidence="4">
    <location>
        <begin position="207"/>
        <end position="209"/>
    </location>
</feature>
<feature type="strand" evidence="6">
    <location>
        <begin position="214"/>
        <end position="217"/>
    </location>
</feature>
<feature type="helix" evidence="4">
    <location>
        <begin position="229"/>
        <end position="243"/>
    </location>
</feature>
<feature type="helix" evidence="4">
    <location>
        <begin position="255"/>
        <end position="257"/>
    </location>
</feature>
<feature type="turn" evidence="7">
    <location>
        <begin position="258"/>
        <end position="260"/>
    </location>
</feature>
<feature type="strand" evidence="6">
    <location>
        <begin position="263"/>
        <end position="265"/>
    </location>
</feature>
<feature type="strand" evidence="4">
    <location>
        <begin position="267"/>
        <end position="279"/>
    </location>
</feature>
<feature type="strand" evidence="4">
    <location>
        <begin position="282"/>
        <end position="288"/>
    </location>
</feature>
<feature type="strand" evidence="4">
    <location>
        <begin position="293"/>
        <end position="299"/>
    </location>
</feature>
<feature type="helix" evidence="4">
    <location>
        <begin position="305"/>
        <end position="310"/>
    </location>
</feature>
<feature type="strand" evidence="4">
    <location>
        <begin position="316"/>
        <end position="323"/>
    </location>
</feature>
<feature type="strand" evidence="4">
    <location>
        <begin position="325"/>
        <end position="335"/>
    </location>
</feature>
<feature type="strand" evidence="4">
    <location>
        <begin position="354"/>
        <end position="358"/>
    </location>
</feature>
<feature type="strand" evidence="7">
    <location>
        <begin position="365"/>
        <end position="368"/>
    </location>
</feature>
<feature type="helix" evidence="4">
    <location>
        <begin position="370"/>
        <end position="380"/>
    </location>
</feature>
<feature type="helix" evidence="4">
    <location>
        <begin position="387"/>
        <end position="393"/>
    </location>
</feature>
<feature type="strand" evidence="4">
    <location>
        <begin position="396"/>
        <end position="403"/>
    </location>
</feature>
<feature type="strand" evidence="4">
    <location>
        <begin position="409"/>
        <end position="412"/>
    </location>
</feature>
<feature type="helix" evidence="4">
    <location>
        <begin position="415"/>
        <end position="418"/>
    </location>
</feature>
<feature type="strand" evidence="4">
    <location>
        <begin position="419"/>
        <end position="421"/>
    </location>
</feature>
<feature type="helix" evidence="4">
    <location>
        <begin position="424"/>
        <end position="435"/>
    </location>
</feature>
<feature type="strand" evidence="4">
    <location>
        <begin position="442"/>
        <end position="447"/>
    </location>
</feature>
<feature type="strand" evidence="4">
    <location>
        <begin position="450"/>
        <end position="454"/>
    </location>
</feature>
<feature type="strand" evidence="4">
    <location>
        <begin position="456"/>
        <end position="460"/>
    </location>
</feature>
<feature type="helix" evidence="4">
    <location>
        <begin position="465"/>
        <end position="472"/>
    </location>
</feature>
<feature type="strand" evidence="4">
    <location>
        <begin position="477"/>
        <end position="479"/>
    </location>
</feature>
<feature type="strand" evidence="4">
    <location>
        <begin position="482"/>
        <end position="488"/>
    </location>
</feature>
<feature type="strand" evidence="4">
    <location>
        <begin position="491"/>
        <end position="495"/>
    </location>
</feature>
<feature type="helix" evidence="4">
    <location>
        <begin position="499"/>
        <end position="507"/>
    </location>
</feature>
<feature type="helix" evidence="4">
    <location>
        <begin position="517"/>
        <end position="526"/>
    </location>
</feature>
<feature type="strand" evidence="7">
    <location>
        <begin position="528"/>
        <end position="530"/>
    </location>
</feature>
<feature type="strand" evidence="4">
    <location>
        <begin position="534"/>
        <end position="536"/>
    </location>
</feature>
<feature type="strand" evidence="4">
    <location>
        <begin position="554"/>
        <end position="558"/>
    </location>
</feature>
<feature type="strand" evidence="4">
    <location>
        <begin position="564"/>
        <end position="569"/>
    </location>
</feature>
<feature type="strand" evidence="4">
    <location>
        <begin position="572"/>
        <end position="577"/>
    </location>
</feature>
<feature type="strand" evidence="4">
    <location>
        <begin position="579"/>
        <end position="581"/>
    </location>
</feature>
<feature type="helix" evidence="4">
    <location>
        <begin position="585"/>
        <end position="589"/>
    </location>
</feature>
<feature type="strand" evidence="4">
    <location>
        <begin position="598"/>
        <end position="603"/>
    </location>
</feature>
<feature type="turn" evidence="4">
    <location>
        <begin position="604"/>
        <end position="607"/>
    </location>
</feature>
<feature type="strand" evidence="4">
    <location>
        <begin position="608"/>
        <end position="614"/>
    </location>
</feature>
<feature type="helix" evidence="4">
    <location>
        <begin position="616"/>
        <end position="618"/>
    </location>
</feature>
<comment type="function">
    <text evidence="1">Possesses two activities: a DNA synthesis (polymerase) and an exonucleolytic activity that degrades single-stranded DNA in the 3' to 5' direction. Has a template-primer preference which is characteristic of a replicative DNA polymerase (By similarity).</text>
</comment>
<comment type="catalytic activity">
    <reaction>
        <text>DNA(n) + a 2'-deoxyribonucleoside 5'-triphosphate = DNA(n+1) + diphosphate</text>
        <dbReference type="Rhea" id="RHEA:22508"/>
        <dbReference type="Rhea" id="RHEA-COMP:17339"/>
        <dbReference type="Rhea" id="RHEA-COMP:17340"/>
        <dbReference type="ChEBI" id="CHEBI:33019"/>
        <dbReference type="ChEBI" id="CHEBI:61560"/>
        <dbReference type="ChEBI" id="CHEBI:173112"/>
        <dbReference type="EC" id="2.7.7.7"/>
    </reaction>
</comment>
<comment type="catalytic activity">
    <reaction>
        <text>Exonucleolytic cleavage in the 3'- to 5'-direction to yield nucleoside 5'-phosphates.</text>
        <dbReference type="EC" id="3.1.11.1"/>
    </reaction>
</comment>
<comment type="subunit">
    <text evidence="1">Heterodimer of a large subunit and a small subunit.</text>
</comment>
<comment type="similarity">
    <text evidence="3">Belongs to the DNA polymerase delta/II small subunit family.</text>
</comment>
<keyword id="KW-0002">3D-structure</keyword>
<keyword id="KW-0235">DNA replication</keyword>
<keyword id="KW-0238">DNA-binding</keyword>
<keyword id="KW-0239">DNA-directed DNA polymerase</keyword>
<keyword id="KW-0269">Exonuclease</keyword>
<keyword id="KW-0378">Hydrolase</keyword>
<keyword id="KW-0511">Multifunctional enzyme</keyword>
<keyword id="KW-0540">Nuclease</keyword>
<keyword id="KW-0548">Nucleotidyltransferase</keyword>
<keyword id="KW-0808">Transferase</keyword>
<protein>
    <recommendedName>
        <fullName>DNA polymerase II small subunit</fullName>
        <shortName>Pol II</shortName>
        <ecNumber>2.7.7.7</ecNumber>
    </recommendedName>
    <alternativeName>
        <fullName>Exodeoxyribonuclease small subunit</fullName>
        <ecNumber>3.1.11.1</ecNumber>
    </alternativeName>
</protein>
<proteinExistence type="evidence at protein level"/>
<name>DP2S_PYRAB</name>